<sequence length="129" mass="14300">MTKADIIEGVYEKVGFSKKESAEIVELVFDTLKETLERGDKIKISGFGNFQVRQKKARVGRNPQTGKEIEISARRVLTFRPSQVLKSALNGEAPPEDHAEIDAREEAAADAAEARGEDFDEEGMEDMEG</sequence>
<accession>Q9K4Q3</accession>
<gene>
    <name type="primary">ihfA</name>
    <name type="synonym">himA</name>
</gene>
<keyword id="KW-0233">DNA recombination</keyword>
<keyword id="KW-0238">DNA-binding</keyword>
<keyword id="KW-0804">Transcription</keyword>
<keyword id="KW-0805">Transcription regulation</keyword>
<keyword id="KW-0810">Translation regulation</keyword>
<proteinExistence type="inferred from homology"/>
<protein>
    <recommendedName>
        <fullName>Integration host factor subunit alpha</fullName>
        <shortName>IHF-alpha</shortName>
    </recommendedName>
</protein>
<evidence type="ECO:0000256" key="1">
    <source>
        <dbReference type="SAM" id="MobiDB-lite"/>
    </source>
</evidence>
<evidence type="ECO:0000305" key="2"/>
<organism>
    <name type="scientific">Myxococcus xanthus</name>
    <dbReference type="NCBI Taxonomy" id="34"/>
    <lineage>
        <taxon>Bacteria</taxon>
        <taxon>Pseudomonadati</taxon>
        <taxon>Myxococcota</taxon>
        <taxon>Myxococcia</taxon>
        <taxon>Myxococcales</taxon>
        <taxon>Cystobacterineae</taxon>
        <taxon>Myxococcaceae</taxon>
        <taxon>Myxococcus</taxon>
    </lineage>
</organism>
<feature type="chain" id="PRO_0000105011" description="Integration host factor subunit alpha">
    <location>
        <begin position="1"/>
        <end position="129"/>
    </location>
</feature>
<feature type="region of interest" description="Disordered" evidence="1">
    <location>
        <begin position="87"/>
        <end position="129"/>
    </location>
</feature>
<feature type="compositionally biased region" description="Basic and acidic residues" evidence="1">
    <location>
        <begin position="95"/>
        <end position="117"/>
    </location>
</feature>
<feature type="compositionally biased region" description="Acidic residues" evidence="1">
    <location>
        <begin position="118"/>
        <end position="129"/>
    </location>
</feature>
<name>IHFA_MYXXA</name>
<reference key="1">
    <citation type="journal article" date="2001" name="J. Bacteriol.">
        <title>ihfA gene of the bacterium Myxococcus xanthus and its role in activation of carotenoid genes by blue light.</title>
        <authorList>
            <person name="Moreno A.J."/>
            <person name="Fontes M."/>
            <person name="Murillo F.J."/>
        </authorList>
    </citation>
    <scope>NUCLEOTIDE SEQUENCE [GENOMIC DNA]</scope>
    <source>
        <strain>DK1050</strain>
    </source>
</reference>
<comment type="function">
    <text>This protein is one of the two subunits of integration host factor, a specific DNA-binding protein that functions in genetic recombination as well as in transcriptional and translational control. It is necessary for normal cell growth and the production of carotenoids in response to light.</text>
</comment>
<comment type="subunit">
    <text>Heterodimer of an alpha and a beta chain.</text>
</comment>
<comment type="similarity">
    <text evidence="2">Belongs to the bacterial histone-like protein family.</text>
</comment>
<dbReference type="EMBL" id="AJ297483">
    <property type="protein sequence ID" value="CAC01236.1"/>
    <property type="molecule type" value="Genomic_DNA"/>
</dbReference>
<dbReference type="RefSeq" id="WP_002639669.1">
    <property type="nucleotide sequence ID" value="NZ_JABFNT010000005.1"/>
</dbReference>
<dbReference type="SMR" id="Q9K4Q3"/>
<dbReference type="OMA" id="AFSAGKM"/>
<dbReference type="GO" id="GO:0005829">
    <property type="term" value="C:cytosol"/>
    <property type="evidence" value="ECO:0007669"/>
    <property type="project" value="TreeGrafter"/>
</dbReference>
<dbReference type="GO" id="GO:0003677">
    <property type="term" value="F:DNA binding"/>
    <property type="evidence" value="ECO:0007669"/>
    <property type="project" value="UniProtKB-UniRule"/>
</dbReference>
<dbReference type="GO" id="GO:0030527">
    <property type="term" value="F:structural constituent of chromatin"/>
    <property type="evidence" value="ECO:0007669"/>
    <property type="project" value="InterPro"/>
</dbReference>
<dbReference type="GO" id="GO:0006310">
    <property type="term" value="P:DNA recombination"/>
    <property type="evidence" value="ECO:0007669"/>
    <property type="project" value="UniProtKB-UniRule"/>
</dbReference>
<dbReference type="GO" id="GO:0009893">
    <property type="term" value="P:positive regulation of metabolic process"/>
    <property type="evidence" value="ECO:0007669"/>
    <property type="project" value="UniProtKB-ARBA"/>
</dbReference>
<dbReference type="GO" id="GO:0006355">
    <property type="term" value="P:regulation of DNA-templated transcription"/>
    <property type="evidence" value="ECO:0007669"/>
    <property type="project" value="UniProtKB-UniRule"/>
</dbReference>
<dbReference type="GO" id="GO:0006417">
    <property type="term" value="P:regulation of translation"/>
    <property type="evidence" value="ECO:0007669"/>
    <property type="project" value="UniProtKB-UniRule"/>
</dbReference>
<dbReference type="CDD" id="cd13835">
    <property type="entry name" value="IHF_A"/>
    <property type="match status" value="1"/>
</dbReference>
<dbReference type="FunFam" id="4.10.520.10:FF:000010">
    <property type="entry name" value="Integration host factor subunit alpha"/>
    <property type="match status" value="1"/>
</dbReference>
<dbReference type="Gene3D" id="4.10.520.10">
    <property type="entry name" value="IHF-like DNA-binding proteins"/>
    <property type="match status" value="1"/>
</dbReference>
<dbReference type="HAMAP" id="MF_00380">
    <property type="entry name" value="IHF_alpha"/>
    <property type="match status" value="1"/>
</dbReference>
<dbReference type="InterPro" id="IPR000119">
    <property type="entry name" value="Hist_DNA-bd"/>
</dbReference>
<dbReference type="InterPro" id="IPR020816">
    <property type="entry name" value="Histone-like_DNA-bd_CS"/>
</dbReference>
<dbReference type="InterPro" id="IPR010992">
    <property type="entry name" value="IHF-like_DNA-bd_dom_sf"/>
</dbReference>
<dbReference type="InterPro" id="IPR005684">
    <property type="entry name" value="IHF_alpha"/>
</dbReference>
<dbReference type="NCBIfam" id="TIGR00987">
    <property type="entry name" value="himA"/>
    <property type="match status" value="1"/>
</dbReference>
<dbReference type="NCBIfam" id="NF001401">
    <property type="entry name" value="PRK00285.1"/>
    <property type="match status" value="1"/>
</dbReference>
<dbReference type="PANTHER" id="PTHR33175">
    <property type="entry name" value="DNA-BINDING PROTEIN HU"/>
    <property type="match status" value="1"/>
</dbReference>
<dbReference type="PANTHER" id="PTHR33175:SF2">
    <property type="entry name" value="INTEGRATION HOST FACTOR SUBUNIT ALPHA"/>
    <property type="match status" value="1"/>
</dbReference>
<dbReference type="Pfam" id="PF00216">
    <property type="entry name" value="Bac_DNA_binding"/>
    <property type="match status" value="1"/>
</dbReference>
<dbReference type="PRINTS" id="PR01727">
    <property type="entry name" value="DNABINDINGHU"/>
</dbReference>
<dbReference type="SMART" id="SM00411">
    <property type="entry name" value="BHL"/>
    <property type="match status" value="1"/>
</dbReference>
<dbReference type="SUPFAM" id="SSF47729">
    <property type="entry name" value="IHF-like DNA-binding proteins"/>
    <property type="match status" value="1"/>
</dbReference>
<dbReference type="PROSITE" id="PS00045">
    <property type="entry name" value="HISTONE_LIKE"/>
    <property type="match status" value="1"/>
</dbReference>